<organism>
    <name type="scientific">Staphylococcus aureus (strain Mu3 / ATCC 700698)</name>
    <dbReference type="NCBI Taxonomy" id="418127"/>
    <lineage>
        <taxon>Bacteria</taxon>
        <taxon>Bacillati</taxon>
        <taxon>Bacillota</taxon>
        <taxon>Bacilli</taxon>
        <taxon>Bacillales</taxon>
        <taxon>Staphylococcaceae</taxon>
        <taxon>Staphylococcus</taxon>
    </lineage>
</organism>
<proteinExistence type="inferred from homology"/>
<protein>
    <recommendedName>
        <fullName evidence="1">Uroporphyrinogen decarboxylase</fullName>
        <shortName evidence="1">UPD</shortName>
        <shortName evidence="1">URO-D</shortName>
        <ecNumber evidence="1">4.1.1.37</ecNumber>
    </recommendedName>
</protein>
<comment type="function">
    <text evidence="1">Catalyzes the decarboxylation of four acetate groups of uroporphyrinogen-III to yield coproporphyrinogen-III.</text>
</comment>
<comment type="catalytic activity">
    <reaction evidence="1">
        <text>uroporphyrinogen III + 4 H(+) = coproporphyrinogen III + 4 CO2</text>
        <dbReference type="Rhea" id="RHEA:19865"/>
        <dbReference type="ChEBI" id="CHEBI:15378"/>
        <dbReference type="ChEBI" id="CHEBI:16526"/>
        <dbReference type="ChEBI" id="CHEBI:57308"/>
        <dbReference type="ChEBI" id="CHEBI:57309"/>
        <dbReference type="EC" id="4.1.1.37"/>
    </reaction>
</comment>
<comment type="pathway">
    <text evidence="1">Porphyrin-containing compound metabolism; protoporphyrin-IX biosynthesis; coproporphyrinogen-III from 5-aminolevulinate: step 4/4.</text>
</comment>
<comment type="subunit">
    <text evidence="1">Homodimer.</text>
</comment>
<comment type="subcellular location">
    <subcellularLocation>
        <location evidence="1">Cytoplasm</location>
    </subcellularLocation>
</comment>
<comment type="similarity">
    <text evidence="1">Belongs to the uroporphyrinogen decarboxylase family.</text>
</comment>
<reference key="1">
    <citation type="journal article" date="2008" name="Antimicrob. Agents Chemother.">
        <title>Mutated response regulator graR is responsible for phenotypic conversion of Staphylococcus aureus from heterogeneous vancomycin-intermediate resistance to vancomycin-intermediate resistance.</title>
        <authorList>
            <person name="Neoh H.-M."/>
            <person name="Cui L."/>
            <person name="Yuzawa H."/>
            <person name="Takeuchi F."/>
            <person name="Matsuo M."/>
            <person name="Hiramatsu K."/>
        </authorList>
    </citation>
    <scope>NUCLEOTIDE SEQUENCE [LARGE SCALE GENOMIC DNA]</scope>
    <source>
        <strain>Mu3 / ATCC 700698</strain>
    </source>
</reference>
<name>DCUP_STAA1</name>
<keyword id="KW-0963">Cytoplasm</keyword>
<keyword id="KW-0210">Decarboxylase</keyword>
<keyword id="KW-0456">Lyase</keyword>
<keyword id="KW-0627">Porphyrin biosynthesis</keyword>
<gene>
    <name evidence="1" type="primary">hemE</name>
    <name type="ordered locus">SAHV_1819</name>
</gene>
<evidence type="ECO:0000255" key="1">
    <source>
        <dbReference type="HAMAP-Rule" id="MF_00218"/>
    </source>
</evidence>
<dbReference type="EC" id="4.1.1.37" evidence="1"/>
<dbReference type="EMBL" id="AP009324">
    <property type="protein sequence ID" value="BAF78702.1"/>
    <property type="molecule type" value="Genomic_DNA"/>
</dbReference>
<dbReference type="RefSeq" id="WP_000233526.1">
    <property type="nucleotide sequence ID" value="NZ_CTYB01000031.1"/>
</dbReference>
<dbReference type="SMR" id="A7X3T8"/>
<dbReference type="KEGG" id="saw:SAHV_1819"/>
<dbReference type="HOGENOM" id="CLU_040933_0_1_9"/>
<dbReference type="UniPathway" id="UPA00251">
    <property type="reaction ID" value="UER00321"/>
</dbReference>
<dbReference type="GO" id="GO:0005829">
    <property type="term" value="C:cytosol"/>
    <property type="evidence" value="ECO:0007669"/>
    <property type="project" value="TreeGrafter"/>
</dbReference>
<dbReference type="GO" id="GO:0004853">
    <property type="term" value="F:uroporphyrinogen decarboxylase activity"/>
    <property type="evidence" value="ECO:0007669"/>
    <property type="project" value="UniProtKB-UniRule"/>
</dbReference>
<dbReference type="GO" id="GO:0006782">
    <property type="term" value="P:protoporphyrinogen IX biosynthetic process"/>
    <property type="evidence" value="ECO:0007669"/>
    <property type="project" value="UniProtKB-UniRule"/>
</dbReference>
<dbReference type="CDD" id="cd00717">
    <property type="entry name" value="URO-D"/>
    <property type="match status" value="1"/>
</dbReference>
<dbReference type="FunFam" id="3.20.20.210:FF:000005">
    <property type="entry name" value="Uroporphyrinogen decarboxylase"/>
    <property type="match status" value="1"/>
</dbReference>
<dbReference type="Gene3D" id="3.20.20.210">
    <property type="match status" value="1"/>
</dbReference>
<dbReference type="HAMAP" id="MF_00218">
    <property type="entry name" value="URO_D"/>
    <property type="match status" value="1"/>
</dbReference>
<dbReference type="InterPro" id="IPR038071">
    <property type="entry name" value="UROD/MetE-like_sf"/>
</dbReference>
<dbReference type="InterPro" id="IPR006361">
    <property type="entry name" value="Uroporphyrinogen_deCO2ase_HemE"/>
</dbReference>
<dbReference type="InterPro" id="IPR000257">
    <property type="entry name" value="Uroporphyrinogen_deCOase"/>
</dbReference>
<dbReference type="NCBIfam" id="TIGR01464">
    <property type="entry name" value="hemE"/>
    <property type="match status" value="1"/>
</dbReference>
<dbReference type="PANTHER" id="PTHR21091">
    <property type="entry name" value="METHYLTETRAHYDROFOLATE:HOMOCYSTEINE METHYLTRANSFERASE RELATED"/>
    <property type="match status" value="1"/>
</dbReference>
<dbReference type="PANTHER" id="PTHR21091:SF169">
    <property type="entry name" value="UROPORPHYRINOGEN DECARBOXYLASE"/>
    <property type="match status" value="1"/>
</dbReference>
<dbReference type="Pfam" id="PF01208">
    <property type="entry name" value="URO-D"/>
    <property type="match status" value="1"/>
</dbReference>
<dbReference type="SUPFAM" id="SSF51726">
    <property type="entry name" value="UROD/MetE-like"/>
    <property type="match status" value="1"/>
</dbReference>
<dbReference type="PROSITE" id="PS00906">
    <property type="entry name" value="UROD_1"/>
    <property type="match status" value="1"/>
</dbReference>
<dbReference type="PROSITE" id="PS00907">
    <property type="entry name" value="UROD_2"/>
    <property type="match status" value="1"/>
</dbReference>
<sequence length="345" mass="39352">MVHNKNNTILKMIKGEETSHTPVWFMRQAGRSQPEYRKLKEKYSLFDITHQPELCAYVTHLPVDNYHTDAAILYKDIMTPLKPIGVDVEIKSGIGPVIHNPIKTIQDVEKLSQIDPERDVPYVLDTIKLLTEEKLNVPLIGFTGAPFTLASYMIEGGPSKNYNFTKAMMYRDEATWFALMNHLVDVSVKYVTAQVEAGAELIQIFDSWVGALNVEDYRRYIKPHMIRLISEVKEKHDVPVILFGVGASHLINEWNDLPIDVLGLDWRTSINQAQQLGVTKTLQGNLDPSILLAPWNVIEERLKPILDQGMENGKHIFNLGHGVFPEVQPETLRKVSEFVHTYTQR</sequence>
<feature type="chain" id="PRO_1000023982" description="Uroporphyrinogen decarboxylase">
    <location>
        <begin position="1"/>
        <end position="345"/>
    </location>
</feature>
<feature type="binding site" evidence="1">
    <location>
        <begin position="27"/>
        <end position="31"/>
    </location>
    <ligand>
        <name>substrate</name>
    </ligand>
</feature>
<feature type="binding site" evidence="1">
    <location>
        <position position="46"/>
    </location>
    <ligand>
        <name>substrate</name>
    </ligand>
</feature>
<feature type="binding site" evidence="1">
    <location>
        <position position="76"/>
    </location>
    <ligand>
        <name>substrate</name>
    </ligand>
</feature>
<feature type="binding site" evidence="1">
    <location>
        <position position="152"/>
    </location>
    <ligand>
        <name>substrate</name>
    </ligand>
</feature>
<feature type="binding site" evidence="1">
    <location>
        <position position="207"/>
    </location>
    <ligand>
        <name>substrate</name>
    </ligand>
</feature>
<feature type="binding site" evidence="1">
    <location>
        <position position="321"/>
    </location>
    <ligand>
        <name>substrate</name>
    </ligand>
</feature>
<feature type="site" description="Transition state stabilizer" evidence="1">
    <location>
        <position position="76"/>
    </location>
</feature>
<accession>A7X3T8</accession>